<comment type="function">
    <text evidence="1">Catalyzes the formation of 6,7-dimethyl-8-ribityllumazine by condensation of 5-amino-6-(D-ribitylamino)uracil with 3,4-dihydroxy-2-butanone 4-phosphate. This is the penultimate step in the biosynthesis of riboflavin.</text>
</comment>
<comment type="catalytic activity">
    <reaction evidence="1">
        <text>(2S)-2-hydroxy-3-oxobutyl phosphate + 5-amino-6-(D-ribitylamino)uracil = 6,7-dimethyl-8-(1-D-ribityl)lumazine + phosphate + 2 H2O + H(+)</text>
        <dbReference type="Rhea" id="RHEA:26152"/>
        <dbReference type="ChEBI" id="CHEBI:15377"/>
        <dbReference type="ChEBI" id="CHEBI:15378"/>
        <dbReference type="ChEBI" id="CHEBI:15934"/>
        <dbReference type="ChEBI" id="CHEBI:43474"/>
        <dbReference type="ChEBI" id="CHEBI:58201"/>
        <dbReference type="ChEBI" id="CHEBI:58830"/>
        <dbReference type="EC" id="2.5.1.78"/>
    </reaction>
</comment>
<comment type="pathway">
    <text evidence="1">Cofactor biosynthesis; riboflavin biosynthesis; riboflavin from 2-hydroxy-3-oxobutyl phosphate and 5-amino-6-(D-ribitylamino)uracil: step 1/2.</text>
</comment>
<comment type="similarity">
    <text evidence="1">Belongs to the DMRL synthase family.</text>
</comment>
<proteinExistence type="inferred from homology"/>
<accession>Q4JAJ2</accession>
<gene>
    <name evidence="1" type="primary">ribH</name>
    <name type="ordered locus">Saci_0820</name>
</gene>
<feature type="chain" id="PRO_0000134852" description="6,7-dimethyl-8-ribityllumazine synthase">
    <location>
        <begin position="1"/>
        <end position="158"/>
    </location>
</feature>
<feature type="active site" description="Proton donor" evidence="1">
    <location>
        <position position="82"/>
    </location>
</feature>
<feature type="binding site" evidence="1">
    <location>
        <position position="18"/>
    </location>
    <ligand>
        <name>5-amino-6-(D-ribitylamino)uracil</name>
        <dbReference type="ChEBI" id="CHEBI:15934"/>
    </ligand>
</feature>
<feature type="binding site" evidence="1">
    <location>
        <begin position="50"/>
        <end position="52"/>
    </location>
    <ligand>
        <name>5-amino-6-(D-ribitylamino)uracil</name>
        <dbReference type="ChEBI" id="CHEBI:15934"/>
    </ligand>
</feature>
<feature type="binding site" evidence="1">
    <location>
        <begin position="74"/>
        <end position="76"/>
    </location>
    <ligand>
        <name>5-amino-6-(D-ribitylamino)uracil</name>
        <dbReference type="ChEBI" id="CHEBI:15934"/>
    </ligand>
</feature>
<feature type="binding site" evidence="1">
    <location>
        <begin position="79"/>
        <end position="80"/>
    </location>
    <ligand>
        <name>(2S)-2-hydroxy-3-oxobutyl phosphate</name>
        <dbReference type="ChEBI" id="CHEBI:58830"/>
    </ligand>
</feature>
<feature type="binding site" evidence="1">
    <location>
        <position position="107"/>
    </location>
    <ligand>
        <name>5-amino-6-(D-ribitylamino)uracil</name>
        <dbReference type="ChEBI" id="CHEBI:15934"/>
    </ligand>
</feature>
<feature type="binding site" evidence="1">
    <location>
        <position position="122"/>
    </location>
    <ligand>
        <name>(2S)-2-hydroxy-3-oxobutyl phosphate</name>
        <dbReference type="ChEBI" id="CHEBI:58830"/>
    </ligand>
</feature>
<keyword id="KW-1185">Reference proteome</keyword>
<keyword id="KW-0686">Riboflavin biosynthesis</keyword>
<keyword id="KW-0808">Transferase</keyword>
<organism>
    <name type="scientific">Sulfolobus acidocaldarius (strain ATCC 33909 / DSM 639 / JCM 8929 / NBRC 15157 / NCIMB 11770)</name>
    <dbReference type="NCBI Taxonomy" id="330779"/>
    <lineage>
        <taxon>Archaea</taxon>
        <taxon>Thermoproteota</taxon>
        <taxon>Thermoprotei</taxon>
        <taxon>Sulfolobales</taxon>
        <taxon>Sulfolobaceae</taxon>
        <taxon>Sulfolobus</taxon>
    </lineage>
</organism>
<sequence>MEMQDQSKINLGIVVSEFNYDITSLMLQRALSHAEFLGVTVKVVVKVPGSYDMAVIVKELLKRDEIDGVVTLGAVIKGETKHDEIVATQTARKLMDLSVEYGKPVTLGIIGHGVTHEQAVERIEEYSMRAVESAVKLIKRLKKLREIDLTKETNVSIE</sequence>
<protein>
    <recommendedName>
        <fullName evidence="1">6,7-dimethyl-8-ribityllumazine synthase</fullName>
        <shortName evidence="1">DMRL synthase</shortName>
        <shortName evidence="1">LS</shortName>
        <shortName evidence="1">Lumazine synthase</shortName>
        <ecNumber evidence="1">2.5.1.78</ecNumber>
    </recommendedName>
</protein>
<name>RISB_SULAC</name>
<reference key="1">
    <citation type="journal article" date="2005" name="J. Bacteriol.">
        <title>The genome of Sulfolobus acidocaldarius, a model organism of the Crenarchaeota.</title>
        <authorList>
            <person name="Chen L."/>
            <person name="Bruegger K."/>
            <person name="Skovgaard M."/>
            <person name="Redder P."/>
            <person name="She Q."/>
            <person name="Torarinsson E."/>
            <person name="Greve B."/>
            <person name="Awayez M."/>
            <person name="Zibat A."/>
            <person name="Klenk H.-P."/>
            <person name="Garrett R.A."/>
        </authorList>
    </citation>
    <scope>NUCLEOTIDE SEQUENCE [LARGE SCALE GENOMIC DNA]</scope>
    <source>
        <strain>ATCC 33909 / DSM 639 / JCM 8929 / NBRC 15157 / NCIMB 11770</strain>
    </source>
</reference>
<evidence type="ECO:0000255" key="1">
    <source>
        <dbReference type="HAMAP-Rule" id="MF_00178"/>
    </source>
</evidence>
<dbReference type="EC" id="2.5.1.78" evidence="1"/>
<dbReference type="EMBL" id="CP000077">
    <property type="protein sequence ID" value="AAY80187.1"/>
    <property type="molecule type" value="Genomic_DNA"/>
</dbReference>
<dbReference type="SMR" id="Q4JAJ2"/>
<dbReference type="STRING" id="330779.Saci_0820"/>
<dbReference type="KEGG" id="sai:Saci_0820"/>
<dbReference type="PATRIC" id="fig|330779.12.peg.784"/>
<dbReference type="eggNOG" id="arCOG01323">
    <property type="taxonomic scope" value="Archaea"/>
</dbReference>
<dbReference type="HOGENOM" id="CLU_089358_3_1_2"/>
<dbReference type="UniPathway" id="UPA00275">
    <property type="reaction ID" value="UER00404"/>
</dbReference>
<dbReference type="Proteomes" id="UP000001018">
    <property type="component" value="Chromosome"/>
</dbReference>
<dbReference type="GO" id="GO:0009349">
    <property type="term" value="C:riboflavin synthase complex"/>
    <property type="evidence" value="ECO:0007669"/>
    <property type="project" value="InterPro"/>
</dbReference>
<dbReference type="GO" id="GO:0000906">
    <property type="term" value="F:6,7-dimethyl-8-ribityllumazine synthase activity"/>
    <property type="evidence" value="ECO:0007669"/>
    <property type="project" value="UniProtKB-UniRule"/>
</dbReference>
<dbReference type="GO" id="GO:0009231">
    <property type="term" value="P:riboflavin biosynthetic process"/>
    <property type="evidence" value="ECO:0007669"/>
    <property type="project" value="UniProtKB-UniRule"/>
</dbReference>
<dbReference type="CDD" id="cd09211">
    <property type="entry name" value="Lumazine_synthase_archaeal"/>
    <property type="match status" value="1"/>
</dbReference>
<dbReference type="FunFam" id="3.40.50.960:FF:000003">
    <property type="entry name" value="6,7-dimethyl-8-ribityllumazine synthase"/>
    <property type="match status" value="1"/>
</dbReference>
<dbReference type="Gene3D" id="3.40.50.960">
    <property type="entry name" value="Lumazine/riboflavin synthase"/>
    <property type="match status" value="1"/>
</dbReference>
<dbReference type="HAMAP" id="MF_00178">
    <property type="entry name" value="Lumazine_synth"/>
    <property type="match status" value="1"/>
</dbReference>
<dbReference type="InterPro" id="IPR034964">
    <property type="entry name" value="LS"/>
</dbReference>
<dbReference type="InterPro" id="IPR002180">
    <property type="entry name" value="LS/RS"/>
</dbReference>
<dbReference type="InterPro" id="IPR036467">
    <property type="entry name" value="LS/RS_sf"/>
</dbReference>
<dbReference type="NCBIfam" id="TIGR00114">
    <property type="entry name" value="lumazine-synth"/>
    <property type="match status" value="1"/>
</dbReference>
<dbReference type="PANTHER" id="PTHR21058:SF0">
    <property type="entry name" value="6,7-DIMETHYL-8-RIBITYLLUMAZINE SYNTHASE"/>
    <property type="match status" value="1"/>
</dbReference>
<dbReference type="PANTHER" id="PTHR21058">
    <property type="entry name" value="6,7-DIMETHYL-8-RIBITYLLUMAZINE SYNTHASE DMRL SYNTHASE LUMAZINE SYNTHASE"/>
    <property type="match status" value="1"/>
</dbReference>
<dbReference type="Pfam" id="PF00885">
    <property type="entry name" value="DMRL_synthase"/>
    <property type="match status" value="1"/>
</dbReference>
<dbReference type="SUPFAM" id="SSF52121">
    <property type="entry name" value="Lumazine synthase"/>
    <property type="match status" value="1"/>
</dbReference>